<sequence>MAAFPAYLALLSYLVPGALSHPEAKTLTSRASTEAYSPPYYPAPNGGWISEWASAYEKAHRVVSNMTLAEKVNLTSGTGIYMGPCAGQTGSVPRFGIPNLCLHDSPLGVRNSDHNTAFPAGITVGATFDKDLMYERGVGLGEEARGKGINVLLGPSVGPIGRKPRGGRNWEGFGADPSLQAFGGSLTIKGMQSTGAIASLKHLIGNEQEQHRMSSVITQGYSSNIDDRTLHELYLWPFAESVRAGAGSVMIAYNDVNRSACSQNSKLINGILKDELGFQGFVVTDWLAHIGGVSSALAGLDMSMPGDGAIPLLGTSYWSWELSRSVLNGSVPVERLNDMVTRIVATWYKMGQDKDYPLPNFSSNTEDETGPLYPGALFSPSGIVNQYVNVQGNHNVTARAIARDAITLLKNNENVLPLKRNDTLKIFGTDAGTNSDGINSCTDKGCNKGVLTMGWGSGTSRLPYLITPQEAIANISSNAEFHITDTFPLGVTAGPDDIAIVFINSDSGENYITVDGNPGDRTLAGLHAWHNGDNLVKAAAEKFSNVVVVVHTVGPILMEEWIDLDSVKAVLVAHLPGQEAGWSLTDILFGDYSPSGHLPYTIPHSESDYPESVGLIAQPFGQIQDDYTEGLYIDYRHFLKANITPRYPFGHGLSYTTFNFTEPNLSIIKALDTAYPAARPPKGSTPTYPTAKPDASEVAWPKNFNRIWRYLYPYLDNPEGAAANSSKTYPYPDGYTTEPKPAPRAGGAEGGNPALWDVTFSVQVKVTNTGSRDGRAVAQLYVELPSSLGLDTPSRQLRQFEKTKILAAGESEVLTLDVTRKDLSVWDVVVQDWKAPVNGEGVKIWVGESVADLRVGCVVGEGCSTL</sequence>
<feature type="signal peptide" evidence="2">
    <location>
        <begin position="1"/>
        <end position="20"/>
    </location>
</feature>
<feature type="chain" id="PRO_0000394112" description="Probable beta-glucosidase F">
    <location>
        <begin position="21"/>
        <end position="866"/>
    </location>
</feature>
<feature type="region of interest" description="Disordered" evidence="3">
    <location>
        <begin position="725"/>
        <end position="748"/>
    </location>
</feature>
<feature type="active site" evidence="1">
    <location>
        <position position="285"/>
    </location>
</feature>
<feature type="glycosylation site" description="N-linked (GlcNAc...) asparagine" evidence="2">
    <location>
        <position position="65"/>
    </location>
</feature>
<feature type="glycosylation site" description="N-linked (GlcNAc...) asparagine" evidence="2">
    <location>
        <position position="73"/>
    </location>
</feature>
<feature type="glycosylation site" description="N-linked (GlcNAc...) asparagine" evidence="2">
    <location>
        <position position="257"/>
    </location>
</feature>
<feature type="glycosylation site" description="N-linked (GlcNAc...) asparagine" evidence="2">
    <location>
        <position position="328"/>
    </location>
</feature>
<feature type="glycosylation site" description="N-linked (GlcNAc...) asparagine" evidence="2">
    <location>
        <position position="360"/>
    </location>
</feature>
<feature type="glycosylation site" description="N-linked (GlcNAc...) asparagine" evidence="2">
    <location>
        <position position="395"/>
    </location>
</feature>
<feature type="glycosylation site" description="N-linked (GlcNAc...) asparagine" evidence="2">
    <location>
        <position position="421"/>
    </location>
</feature>
<feature type="glycosylation site" description="N-linked (GlcNAc...) asparagine" evidence="2">
    <location>
        <position position="474"/>
    </location>
</feature>
<feature type="glycosylation site" description="N-linked (GlcNAc...) asparagine" evidence="2">
    <location>
        <position position="659"/>
    </location>
</feature>
<feature type="glycosylation site" description="N-linked (GlcNAc...) asparagine" evidence="2">
    <location>
        <position position="664"/>
    </location>
</feature>
<feature type="glycosylation site" description="N-linked (GlcNAc...) asparagine" evidence="2">
    <location>
        <position position="724"/>
    </location>
</feature>
<proteinExistence type="inferred from homology"/>
<keyword id="KW-0119">Carbohydrate metabolism</keyword>
<keyword id="KW-0136">Cellulose degradation</keyword>
<keyword id="KW-0325">Glycoprotein</keyword>
<keyword id="KW-0326">Glycosidase</keyword>
<keyword id="KW-0378">Hydrolase</keyword>
<keyword id="KW-0624">Polysaccharide degradation</keyword>
<keyword id="KW-1185">Reference proteome</keyword>
<keyword id="KW-0964">Secreted</keyword>
<keyword id="KW-0732">Signal</keyword>
<protein>
    <recommendedName>
        <fullName>Probable beta-glucosidase F</fullName>
        <ecNumber>3.2.1.21</ecNumber>
    </recommendedName>
    <alternativeName>
        <fullName>Beta-D-glucoside glucohydrolase F</fullName>
    </alternativeName>
    <alternativeName>
        <fullName>Cellobiase F</fullName>
    </alternativeName>
    <alternativeName>
        <fullName>Gentiobiase F</fullName>
    </alternativeName>
</protein>
<evidence type="ECO:0000250" key="1"/>
<evidence type="ECO:0000255" key="2"/>
<evidence type="ECO:0000256" key="3">
    <source>
        <dbReference type="SAM" id="MobiDB-lite"/>
    </source>
</evidence>
<evidence type="ECO:0000305" key="4"/>
<comment type="function">
    <text evidence="1">Beta-glucosidases are one of a number of cellulolytic enzymes involved in the degradation of cellulosic biomass. Catalyzes the last step releasing glucose from the inhibitory cellobiose (By similarity).</text>
</comment>
<comment type="catalytic activity">
    <reaction>
        <text>Hydrolysis of terminal, non-reducing beta-D-glucosyl residues with release of beta-D-glucose.</text>
        <dbReference type="EC" id="3.2.1.21"/>
    </reaction>
</comment>
<comment type="pathway">
    <text>Glycan metabolism; cellulose degradation.</text>
</comment>
<comment type="subcellular location">
    <subcellularLocation>
        <location evidence="1">Secreted</location>
    </subcellularLocation>
</comment>
<comment type="similarity">
    <text evidence="4">Belongs to the glycosyl hydrolase 3 family.</text>
</comment>
<accession>Q2UN12</accession>
<dbReference type="EC" id="3.2.1.21"/>
<dbReference type="EMBL" id="BA000050">
    <property type="protein sequence ID" value="BAE57053.1"/>
    <property type="molecule type" value="Genomic_DNA"/>
</dbReference>
<dbReference type="RefSeq" id="XP_001819055.1">
    <property type="nucleotide sequence ID" value="XM_001819003.1"/>
</dbReference>
<dbReference type="SMR" id="Q2UN12"/>
<dbReference type="STRING" id="510516.Q2UN12"/>
<dbReference type="CAZy" id="GH3">
    <property type="family name" value="Glycoside Hydrolase Family 3"/>
</dbReference>
<dbReference type="GlyCosmos" id="Q2UN12">
    <property type="glycosylation" value="11 sites, No reported glycans"/>
</dbReference>
<dbReference type="EnsemblFungi" id="BAE57053">
    <property type="protein sequence ID" value="BAE57053"/>
    <property type="gene ID" value="AO090001000544"/>
</dbReference>
<dbReference type="GeneID" id="5991026"/>
<dbReference type="KEGG" id="aor:AO090001000544"/>
<dbReference type="VEuPathDB" id="FungiDB:AO090001000544"/>
<dbReference type="HOGENOM" id="CLU_004542_2_0_1"/>
<dbReference type="OMA" id="PAPYGGW"/>
<dbReference type="OrthoDB" id="59076at5052"/>
<dbReference type="UniPathway" id="UPA00696"/>
<dbReference type="Proteomes" id="UP000006564">
    <property type="component" value="Chromosome 2"/>
</dbReference>
<dbReference type="GO" id="GO:0005576">
    <property type="term" value="C:extracellular region"/>
    <property type="evidence" value="ECO:0007669"/>
    <property type="project" value="UniProtKB-SubCell"/>
</dbReference>
<dbReference type="GO" id="GO:0008422">
    <property type="term" value="F:beta-glucosidase activity"/>
    <property type="evidence" value="ECO:0000314"/>
    <property type="project" value="AspGD"/>
</dbReference>
<dbReference type="GO" id="GO:0030245">
    <property type="term" value="P:cellulose catabolic process"/>
    <property type="evidence" value="ECO:0007669"/>
    <property type="project" value="UniProtKB-UniPathway"/>
</dbReference>
<dbReference type="FunFam" id="2.60.40.10:FF:001619">
    <property type="entry name" value="Beta-glucosidase"/>
    <property type="match status" value="1"/>
</dbReference>
<dbReference type="FunFam" id="3.20.20.300:FF:000002">
    <property type="entry name" value="Probable beta-glucosidase"/>
    <property type="match status" value="1"/>
</dbReference>
<dbReference type="FunFam" id="3.40.50.1700:FF:000003">
    <property type="entry name" value="Probable beta-glucosidase"/>
    <property type="match status" value="1"/>
</dbReference>
<dbReference type="Gene3D" id="3.40.50.1700">
    <property type="entry name" value="Glycoside hydrolase family 3 C-terminal domain"/>
    <property type="match status" value="1"/>
</dbReference>
<dbReference type="Gene3D" id="3.20.20.300">
    <property type="entry name" value="Glycoside hydrolase, family 3, N-terminal domain"/>
    <property type="match status" value="1"/>
</dbReference>
<dbReference type="Gene3D" id="2.60.40.10">
    <property type="entry name" value="Immunoglobulins"/>
    <property type="match status" value="1"/>
</dbReference>
<dbReference type="InterPro" id="IPR050288">
    <property type="entry name" value="Cellulose_deg_GH3"/>
</dbReference>
<dbReference type="InterPro" id="IPR026891">
    <property type="entry name" value="Fn3-like"/>
</dbReference>
<dbReference type="InterPro" id="IPR019800">
    <property type="entry name" value="Glyco_hydro_3_AS"/>
</dbReference>
<dbReference type="InterPro" id="IPR002772">
    <property type="entry name" value="Glyco_hydro_3_C"/>
</dbReference>
<dbReference type="InterPro" id="IPR036881">
    <property type="entry name" value="Glyco_hydro_3_C_sf"/>
</dbReference>
<dbReference type="InterPro" id="IPR001764">
    <property type="entry name" value="Glyco_hydro_3_N"/>
</dbReference>
<dbReference type="InterPro" id="IPR036962">
    <property type="entry name" value="Glyco_hydro_3_N_sf"/>
</dbReference>
<dbReference type="InterPro" id="IPR017853">
    <property type="entry name" value="Glycoside_hydrolase_SF"/>
</dbReference>
<dbReference type="InterPro" id="IPR013783">
    <property type="entry name" value="Ig-like_fold"/>
</dbReference>
<dbReference type="PANTHER" id="PTHR42715">
    <property type="entry name" value="BETA-GLUCOSIDASE"/>
    <property type="match status" value="1"/>
</dbReference>
<dbReference type="PANTHER" id="PTHR42715:SF2">
    <property type="entry name" value="BETA-GLUCOSIDASE F-RELATED"/>
    <property type="match status" value="1"/>
</dbReference>
<dbReference type="Pfam" id="PF14310">
    <property type="entry name" value="Fn3-like"/>
    <property type="match status" value="1"/>
</dbReference>
<dbReference type="Pfam" id="PF00933">
    <property type="entry name" value="Glyco_hydro_3"/>
    <property type="match status" value="1"/>
</dbReference>
<dbReference type="Pfam" id="PF01915">
    <property type="entry name" value="Glyco_hydro_3_C"/>
    <property type="match status" value="1"/>
</dbReference>
<dbReference type="PRINTS" id="PR00133">
    <property type="entry name" value="GLHYDRLASE3"/>
</dbReference>
<dbReference type="SMART" id="SM01217">
    <property type="entry name" value="Fn3_like"/>
    <property type="match status" value="1"/>
</dbReference>
<dbReference type="SUPFAM" id="SSF51445">
    <property type="entry name" value="(Trans)glycosidases"/>
    <property type="match status" value="1"/>
</dbReference>
<dbReference type="SUPFAM" id="SSF52279">
    <property type="entry name" value="Beta-D-glucan exohydrolase, C-terminal domain"/>
    <property type="match status" value="1"/>
</dbReference>
<dbReference type="PROSITE" id="PS00775">
    <property type="entry name" value="GLYCOSYL_HYDROL_F3"/>
    <property type="match status" value="1"/>
</dbReference>
<name>BGLF_ASPOR</name>
<gene>
    <name type="primary">bglF</name>
    <name type="ORF">AO090001000544</name>
</gene>
<reference key="1">
    <citation type="journal article" date="2005" name="Nature">
        <title>Genome sequencing and analysis of Aspergillus oryzae.</title>
        <authorList>
            <person name="Machida M."/>
            <person name="Asai K."/>
            <person name="Sano M."/>
            <person name="Tanaka T."/>
            <person name="Kumagai T."/>
            <person name="Terai G."/>
            <person name="Kusumoto K."/>
            <person name="Arima T."/>
            <person name="Akita O."/>
            <person name="Kashiwagi Y."/>
            <person name="Abe K."/>
            <person name="Gomi K."/>
            <person name="Horiuchi H."/>
            <person name="Kitamoto K."/>
            <person name="Kobayashi T."/>
            <person name="Takeuchi M."/>
            <person name="Denning D.W."/>
            <person name="Galagan J.E."/>
            <person name="Nierman W.C."/>
            <person name="Yu J."/>
            <person name="Archer D.B."/>
            <person name="Bennett J.W."/>
            <person name="Bhatnagar D."/>
            <person name="Cleveland T.E."/>
            <person name="Fedorova N.D."/>
            <person name="Gotoh O."/>
            <person name="Horikawa H."/>
            <person name="Hosoyama A."/>
            <person name="Ichinomiya M."/>
            <person name="Igarashi R."/>
            <person name="Iwashita K."/>
            <person name="Juvvadi P.R."/>
            <person name="Kato M."/>
            <person name="Kato Y."/>
            <person name="Kin T."/>
            <person name="Kokubun A."/>
            <person name="Maeda H."/>
            <person name="Maeyama N."/>
            <person name="Maruyama J."/>
            <person name="Nagasaki H."/>
            <person name="Nakajima T."/>
            <person name="Oda K."/>
            <person name="Okada K."/>
            <person name="Paulsen I."/>
            <person name="Sakamoto K."/>
            <person name="Sawano T."/>
            <person name="Takahashi M."/>
            <person name="Takase K."/>
            <person name="Terabayashi Y."/>
            <person name="Wortman J.R."/>
            <person name="Yamada O."/>
            <person name="Yamagata Y."/>
            <person name="Anazawa H."/>
            <person name="Hata Y."/>
            <person name="Koide Y."/>
            <person name="Komori T."/>
            <person name="Koyama Y."/>
            <person name="Minetoki T."/>
            <person name="Suharnan S."/>
            <person name="Tanaka A."/>
            <person name="Isono K."/>
            <person name="Kuhara S."/>
            <person name="Ogasawara N."/>
            <person name="Kikuchi H."/>
        </authorList>
    </citation>
    <scope>NUCLEOTIDE SEQUENCE [LARGE SCALE GENOMIC DNA]</scope>
    <source>
        <strain>ATCC 42149 / RIB 40</strain>
    </source>
</reference>
<organism>
    <name type="scientific">Aspergillus oryzae (strain ATCC 42149 / RIB 40)</name>
    <name type="common">Yellow koji mold</name>
    <dbReference type="NCBI Taxonomy" id="510516"/>
    <lineage>
        <taxon>Eukaryota</taxon>
        <taxon>Fungi</taxon>
        <taxon>Dikarya</taxon>
        <taxon>Ascomycota</taxon>
        <taxon>Pezizomycotina</taxon>
        <taxon>Eurotiomycetes</taxon>
        <taxon>Eurotiomycetidae</taxon>
        <taxon>Eurotiales</taxon>
        <taxon>Aspergillaceae</taxon>
        <taxon>Aspergillus</taxon>
        <taxon>Aspergillus subgen. Circumdati</taxon>
    </lineage>
</organism>